<protein>
    <recommendedName>
        <fullName>Auxin response factor 24</fullName>
    </recommendedName>
</protein>
<feature type="chain" id="PRO_0000299284" description="Auxin response factor 24">
    <location>
        <begin position="1"/>
        <end position="841"/>
    </location>
</feature>
<feature type="domain" description="PB1" evidence="3">
    <location>
        <begin position="713"/>
        <end position="797"/>
    </location>
</feature>
<feature type="DNA-binding region" description="TF-B3" evidence="2">
    <location>
        <begin position="148"/>
        <end position="250"/>
    </location>
</feature>
<feature type="region of interest" description="Disordered" evidence="4">
    <location>
        <begin position="109"/>
        <end position="140"/>
    </location>
</feature>
<feature type="region of interest" description="Disordered" evidence="4">
    <location>
        <begin position="366"/>
        <end position="397"/>
    </location>
</feature>
<feature type="region of interest" description="Disordered" evidence="4">
    <location>
        <begin position="663"/>
        <end position="715"/>
    </location>
</feature>
<feature type="region of interest" description="Disordered" evidence="4">
    <location>
        <begin position="804"/>
        <end position="841"/>
    </location>
</feature>
<feature type="compositionally biased region" description="Basic and acidic residues" evidence="4">
    <location>
        <begin position="684"/>
        <end position="695"/>
    </location>
</feature>
<feature type="compositionally biased region" description="Polar residues" evidence="4">
    <location>
        <begin position="701"/>
        <end position="713"/>
    </location>
</feature>
<feature type="compositionally biased region" description="Polar residues" evidence="4">
    <location>
        <begin position="830"/>
        <end position="841"/>
    </location>
</feature>
<feature type="splice variant" id="VSP_027596" description="In isoform 2." evidence="6">
    <location>
        <position position="114"/>
    </location>
</feature>
<proteinExistence type="evidence at transcript level"/>
<evidence type="ECO:0000250" key="1"/>
<evidence type="ECO:0000255" key="2">
    <source>
        <dbReference type="PROSITE-ProRule" id="PRU00326"/>
    </source>
</evidence>
<evidence type="ECO:0000255" key="3">
    <source>
        <dbReference type="PROSITE-ProRule" id="PRU01081"/>
    </source>
</evidence>
<evidence type="ECO:0000256" key="4">
    <source>
        <dbReference type="SAM" id="MobiDB-lite"/>
    </source>
</evidence>
<evidence type="ECO:0000269" key="5">
    <source>
    </source>
</evidence>
<evidence type="ECO:0000303" key="6">
    <source>
    </source>
</evidence>
<evidence type="ECO:0000305" key="7"/>
<organism>
    <name type="scientific">Oryza sativa subsp. japonica</name>
    <name type="common">Rice</name>
    <dbReference type="NCBI Taxonomy" id="39947"/>
    <lineage>
        <taxon>Eukaryota</taxon>
        <taxon>Viridiplantae</taxon>
        <taxon>Streptophyta</taxon>
        <taxon>Embryophyta</taxon>
        <taxon>Tracheophyta</taxon>
        <taxon>Spermatophyta</taxon>
        <taxon>Magnoliopsida</taxon>
        <taxon>Liliopsida</taxon>
        <taxon>Poales</taxon>
        <taxon>Poaceae</taxon>
        <taxon>BOP clade</taxon>
        <taxon>Oryzoideae</taxon>
        <taxon>Oryzeae</taxon>
        <taxon>Oryzinae</taxon>
        <taxon>Oryza</taxon>
        <taxon>Oryza sativa</taxon>
    </lineage>
</organism>
<reference key="1">
    <citation type="journal article" date="2005" name="BMC Biol.">
        <title>The sequence of rice chromosomes 11 and 12, rich in disease resistance genes and recent gene duplications.</title>
        <authorList>
            <consortium name="The rice chromosomes 11 and 12 sequencing consortia"/>
        </authorList>
    </citation>
    <scope>NUCLEOTIDE SEQUENCE [LARGE SCALE GENOMIC DNA]</scope>
    <source>
        <strain>cv. Nipponbare</strain>
    </source>
</reference>
<reference key="2">
    <citation type="journal article" date="2005" name="Nature">
        <title>The map-based sequence of the rice genome.</title>
        <authorList>
            <consortium name="International rice genome sequencing project (IRGSP)"/>
        </authorList>
    </citation>
    <scope>NUCLEOTIDE SEQUENCE [LARGE SCALE GENOMIC DNA]</scope>
    <source>
        <strain>cv. Nipponbare</strain>
    </source>
</reference>
<reference key="3">
    <citation type="journal article" date="2008" name="Nucleic Acids Res.">
        <title>The rice annotation project database (RAP-DB): 2008 update.</title>
        <authorList>
            <consortium name="The rice annotation project (RAP)"/>
        </authorList>
    </citation>
    <scope>GENOME REANNOTATION</scope>
    <source>
        <strain>cv. Nipponbare</strain>
    </source>
</reference>
<reference key="4">
    <citation type="journal article" date="2013" name="Rice">
        <title>Improvement of the Oryza sativa Nipponbare reference genome using next generation sequence and optical map data.</title>
        <authorList>
            <person name="Kawahara Y."/>
            <person name="de la Bastide M."/>
            <person name="Hamilton J.P."/>
            <person name="Kanamori H."/>
            <person name="McCombie W.R."/>
            <person name="Ouyang S."/>
            <person name="Schwartz D.C."/>
            <person name="Tanaka T."/>
            <person name="Wu J."/>
            <person name="Zhou S."/>
            <person name="Childs K.L."/>
            <person name="Davidson R.M."/>
            <person name="Lin H."/>
            <person name="Quesada-Ocampo L."/>
            <person name="Vaillancourt B."/>
            <person name="Sakai H."/>
            <person name="Lee S.S."/>
            <person name="Kim J."/>
            <person name="Numa H."/>
            <person name="Itoh T."/>
            <person name="Buell C.R."/>
            <person name="Matsumoto T."/>
        </authorList>
    </citation>
    <scope>GENOME REANNOTATION</scope>
    <source>
        <strain>cv. Nipponbare</strain>
    </source>
</reference>
<reference key="5">
    <citation type="journal article" date="2003" name="Science">
        <title>Collection, mapping, and annotation of over 28,000 cDNA clones from japonica rice.</title>
        <authorList>
            <consortium name="The rice full-length cDNA consortium"/>
        </authorList>
    </citation>
    <scope>NUCLEOTIDE SEQUENCE [LARGE SCALE MRNA] (ISOFORMS 1 AND 2)</scope>
    <source>
        <strain>cv. Nipponbare</strain>
    </source>
</reference>
<reference key="6">
    <citation type="journal article" date="2007" name="Gene">
        <title>Genome-wide analysis of the auxin response factors (ARF) gene family in rice (Oryza sativa).</title>
        <authorList>
            <person name="Wang D."/>
            <person name="Pei K."/>
            <person name="Fu Y."/>
            <person name="Sun Z."/>
            <person name="Li S."/>
            <person name="Liu H."/>
            <person name="Tang K."/>
            <person name="Han B."/>
            <person name="Tao Y."/>
        </authorList>
    </citation>
    <scope>GENE FAMILY</scope>
    <scope>TISSUE SPECIFICITY</scope>
    <scope>NOMENCLATURE</scope>
</reference>
<name>ARFX_ORYSJ</name>
<accession>Q2QQX6</accession>
<accession>A0A0P0YA23</accession>
<accession>B7ED01</accession>
<accession>Q2QQX7</accession>
<sequence>MAAAATAAASPVEGLTGGGGGGGGGVDGLFVELWRACAGPLVTVPAVGERVFYLPQGHIEQVEASTNQVAEQQGAPLYNLPWKIPCKVMNVELKAEPDTDEVYAQLTLLPEKQQDGNGSGNGNVSKDKVEEEEVVPPAATERPRVHSFCKTLTASDTSTHGGFSVLRRHADECLPPLDMSQHPPTQELVAKDLHGVEWRFRHIFRGQPRRHLLQSGWSVFVSAKRLVAGDAFIFLRGENGELRVGVRRAMRQQANIPSSVISSHSMHLGVLATAWHAVNTGTMFTVYYKPRTSPSEFVVPRDLYKESLKRNHSIGMRFKMTFEGEEAAEQRFTGTIVGVGDSDPSGWADSKWRSLKVRWDEAASVPRPDRVSPWQIEPANSPSPVNPLPAPRTKRARPNVLASSPDLSAVNKEVASKVMANSQQNGLPRAFHSQENMNLRSRFGDSNELNTSQKLTMWSSGSNQEKNNVSVQRELGSQSWMQMRRPDGSSEILSGFQPLKDTRNPLSSFPSQISGNRSNTWNTINVHYPDQNANHNMYPGTWSLMPPNTGFGVNQQNYLMTPDITLPQRSLNAKFGGNGAFTSLRAHGIDQRSSGWLGHIEPSSHIDDASSSLIKPQPLVIDHNVQKAKGSSCMLFGISLDSPAKPELLISPPSVAFDGKLQQDALEEDECSDPSKTVKPLDGAQHDSAREKHQSCPDGTKNIQSKQQNGSSRSCKKVHKQGIALGRSIDLTKFTCYDELIAELDQMFDFNGELNSSSKNWMVVYTDNEGDMMLVGDDPWNEFCNMVHKIFIYTREEVQKMNPGALNSRSEDSRSTSVERGLVGEGLQGGLSTPSLNSENC</sequence>
<dbReference type="EMBL" id="DP000011">
    <property type="protein sequence ID" value="ABA98246.1"/>
    <property type="molecule type" value="Genomic_DNA"/>
</dbReference>
<dbReference type="EMBL" id="DP000011">
    <property type="protein sequence ID" value="ABA98247.1"/>
    <property type="molecule type" value="Genomic_DNA"/>
</dbReference>
<dbReference type="EMBL" id="AP008218">
    <property type="protein sequence ID" value="BAF29784.1"/>
    <property type="molecule type" value="Genomic_DNA"/>
</dbReference>
<dbReference type="EMBL" id="AP014968">
    <property type="protein sequence ID" value="BAT17132.1"/>
    <property type="molecule type" value="Genomic_DNA"/>
</dbReference>
<dbReference type="EMBL" id="AP014968">
    <property type="protein sequence ID" value="BAT17133.1"/>
    <property type="molecule type" value="Genomic_DNA"/>
</dbReference>
<dbReference type="EMBL" id="AK065254">
    <property type="status" value="NOT_ANNOTATED_CDS"/>
    <property type="molecule type" value="mRNA"/>
</dbReference>
<dbReference type="EMBL" id="AK067061">
    <property type="protein sequence ID" value="BAG90248.1"/>
    <property type="molecule type" value="mRNA"/>
</dbReference>
<dbReference type="RefSeq" id="XP_015620411.1">
    <property type="nucleotide sequence ID" value="XM_015764925.1"/>
</dbReference>
<dbReference type="RefSeq" id="XP_015620412.1">
    <molecule id="Q2QQX6-1"/>
    <property type="nucleotide sequence ID" value="XM_015764926.1"/>
</dbReference>
<dbReference type="RefSeq" id="XP_015620413.1">
    <property type="nucleotide sequence ID" value="XM_015764927.1"/>
</dbReference>
<dbReference type="SMR" id="Q2QQX6"/>
<dbReference type="FunCoup" id="Q2QQX6">
    <property type="interactions" value="1727"/>
</dbReference>
<dbReference type="STRING" id="39947.Q2QQX6"/>
<dbReference type="PaxDb" id="39947-Q2QQX6"/>
<dbReference type="EnsemblPlants" id="Os12t0479400-02">
    <molecule id="Q2QQX6-1"/>
    <property type="protein sequence ID" value="Os12t0479400-02"/>
    <property type="gene ID" value="Os12g0479400"/>
</dbReference>
<dbReference type="GeneID" id="4352211"/>
<dbReference type="Gramene" id="Os12t0479400-02">
    <molecule id="Q2QQX6-1"/>
    <property type="protein sequence ID" value="Os12t0479400-02"/>
    <property type="gene ID" value="Os12g0479400"/>
</dbReference>
<dbReference type="KEGG" id="dosa:Os12g0479400"/>
<dbReference type="eggNOG" id="ENOG502QRXI">
    <property type="taxonomic scope" value="Eukaryota"/>
</dbReference>
<dbReference type="InParanoid" id="Q2QQX6"/>
<dbReference type="OMA" id="RNHSIGM"/>
<dbReference type="OrthoDB" id="1912783at2759"/>
<dbReference type="PlantReactome" id="R-OSA-5608118">
    <property type="pathway name" value="Auxin signalling"/>
</dbReference>
<dbReference type="Proteomes" id="UP000000763">
    <property type="component" value="Chromosome 12"/>
</dbReference>
<dbReference type="Proteomes" id="UP000059680">
    <property type="component" value="Chromosome 12"/>
</dbReference>
<dbReference type="ExpressionAtlas" id="Q2QQX6">
    <property type="expression patterns" value="baseline and differential"/>
</dbReference>
<dbReference type="GO" id="GO:0005634">
    <property type="term" value="C:nucleus"/>
    <property type="evidence" value="ECO:0007669"/>
    <property type="project" value="UniProtKB-SubCell"/>
</dbReference>
<dbReference type="GO" id="GO:0003677">
    <property type="term" value="F:DNA binding"/>
    <property type="evidence" value="ECO:0007669"/>
    <property type="project" value="UniProtKB-KW"/>
</dbReference>
<dbReference type="GO" id="GO:0009734">
    <property type="term" value="P:auxin-activated signaling pathway"/>
    <property type="evidence" value="ECO:0007669"/>
    <property type="project" value="UniProtKB-KW"/>
</dbReference>
<dbReference type="GO" id="GO:0006355">
    <property type="term" value="P:regulation of DNA-templated transcription"/>
    <property type="evidence" value="ECO:0007669"/>
    <property type="project" value="InterPro"/>
</dbReference>
<dbReference type="CDD" id="cd10017">
    <property type="entry name" value="B3_DNA"/>
    <property type="match status" value="1"/>
</dbReference>
<dbReference type="FunFam" id="2.30.30.1040:FF:000001">
    <property type="entry name" value="Auxin response factor"/>
    <property type="match status" value="1"/>
</dbReference>
<dbReference type="FunFam" id="2.40.330.10:FF:000001">
    <property type="entry name" value="Auxin response factor"/>
    <property type="match status" value="1"/>
</dbReference>
<dbReference type="FunFam" id="3.10.20.90:FF:000047">
    <property type="entry name" value="Auxin response factor"/>
    <property type="match status" value="1"/>
</dbReference>
<dbReference type="Gene3D" id="2.30.30.1040">
    <property type="match status" value="1"/>
</dbReference>
<dbReference type="Gene3D" id="2.40.330.10">
    <property type="entry name" value="DNA-binding pseudobarrel domain"/>
    <property type="match status" value="1"/>
</dbReference>
<dbReference type="Gene3D" id="3.10.20.90">
    <property type="entry name" value="Phosphatidylinositol 3-kinase Catalytic Subunit, Chain A, domain 1"/>
    <property type="match status" value="1"/>
</dbReference>
<dbReference type="InterPro" id="IPR010525">
    <property type="entry name" value="ARF_dom"/>
</dbReference>
<dbReference type="InterPro" id="IPR044835">
    <property type="entry name" value="ARF_plant"/>
</dbReference>
<dbReference type="InterPro" id="IPR033389">
    <property type="entry name" value="AUX/IAA_dom"/>
</dbReference>
<dbReference type="InterPro" id="IPR003340">
    <property type="entry name" value="B3_DNA-bd"/>
</dbReference>
<dbReference type="InterPro" id="IPR015300">
    <property type="entry name" value="DNA-bd_pseudobarrel_sf"/>
</dbReference>
<dbReference type="InterPro" id="IPR053793">
    <property type="entry name" value="PB1-like"/>
</dbReference>
<dbReference type="PANTHER" id="PTHR31384:SF40">
    <property type="entry name" value="AUXIN RESPONSE FACTOR 24"/>
    <property type="match status" value="1"/>
</dbReference>
<dbReference type="PANTHER" id="PTHR31384">
    <property type="entry name" value="AUXIN RESPONSE FACTOR 4-RELATED"/>
    <property type="match status" value="1"/>
</dbReference>
<dbReference type="Pfam" id="PF06507">
    <property type="entry name" value="ARF_AD"/>
    <property type="match status" value="1"/>
</dbReference>
<dbReference type="Pfam" id="PF02309">
    <property type="entry name" value="AUX_IAA"/>
    <property type="match status" value="1"/>
</dbReference>
<dbReference type="Pfam" id="PF02362">
    <property type="entry name" value="B3"/>
    <property type="match status" value="1"/>
</dbReference>
<dbReference type="SMART" id="SM01019">
    <property type="entry name" value="B3"/>
    <property type="match status" value="1"/>
</dbReference>
<dbReference type="SUPFAM" id="SSF54277">
    <property type="entry name" value="CAD &amp; PB1 domains"/>
    <property type="match status" value="1"/>
</dbReference>
<dbReference type="SUPFAM" id="SSF101936">
    <property type="entry name" value="DNA-binding pseudobarrel domain"/>
    <property type="match status" value="1"/>
</dbReference>
<dbReference type="PROSITE" id="PS50863">
    <property type="entry name" value="B3"/>
    <property type="match status" value="1"/>
</dbReference>
<dbReference type="PROSITE" id="PS51745">
    <property type="entry name" value="PB1"/>
    <property type="match status" value="1"/>
</dbReference>
<keyword id="KW-0025">Alternative splicing</keyword>
<keyword id="KW-0927">Auxin signaling pathway</keyword>
<keyword id="KW-0238">DNA-binding</keyword>
<keyword id="KW-0539">Nucleus</keyword>
<keyword id="KW-1185">Reference proteome</keyword>
<keyword id="KW-0804">Transcription</keyword>
<keyword id="KW-0805">Transcription regulation</keyword>
<comment type="function">
    <text>Auxin response factors (ARFs) are transcriptional factors that bind specifically to the DNA sequence 5'-TGTCTC-3' found in the auxin-responsive promoter elements (AuxREs).</text>
</comment>
<comment type="subunit">
    <text evidence="1">Homodimers and heterodimers.</text>
</comment>
<comment type="subcellular location">
    <subcellularLocation>
        <location evidence="2">Nucleus</location>
    </subcellularLocation>
</comment>
<comment type="alternative products">
    <event type="alternative splicing"/>
    <isoform>
        <id>Q2QQX6-1</id>
        <name>1</name>
        <sequence type="displayed"/>
    </isoform>
    <isoform>
        <id>Q2QQX6-2</id>
        <name>2</name>
        <sequence type="described" ref="VSP_027596"/>
    </isoform>
</comment>
<comment type="tissue specificity">
    <text evidence="5">Expressed in roots, culms, leaves and young panicles.</text>
</comment>
<comment type="domain">
    <text>Interactions between auxin response factors (ARFs) and Aux/IAA proteins occur through their C-terminal dimerization domains III and IV.</text>
</comment>
<comment type="miscellaneous">
    <molecule>Isoform 2</molecule>
    <text evidence="7">May be due to competing acceptor splice site.</text>
</comment>
<comment type="similarity">
    <text evidence="7">Belongs to the ARF family.</text>
</comment>
<comment type="sequence caution" evidence="7">
    <conflict type="frameshift">
        <sequence resource="EMBL" id="AK065254"/>
    </conflict>
</comment>
<gene>
    <name type="primary">ARF24</name>
    <name type="ordered locus">Os12g0479400</name>
    <name type="ordered locus">LOC_Os12g29520</name>
</gene>